<evidence type="ECO:0000255" key="1">
    <source>
        <dbReference type="HAMAP-Rule" id="MF_00272"/>
    </source>
</evidence>
<evidence type="ECO:0000255" key="2">
    <source>
        <dbReference type="PROSITE-ProRule" id="PRU01066"/>
    </source>
</evidence>
<comment type="function">
    <text evidence="1">The glycine cleavage system catalyzes the degradation of glycine. The H protein shuttles the methylamine group of glycine from the P protein to the T protein.</text>
</comment>
<comment type="cofactor">
    <cofactor evidence="1">
        <name>(R)-lipoate</name>
        <dbReference type="ChEBI" id="CHEBI:83088"/>
    </cofactor>
    <text evidence="1">Binds 1 lipoyl cofactor covalently.</text>
</comment>
<comment type="subunit">
    <text evidence="1">The glycine cleavage system is composed of four proteins: P, T, L and H.</text>
</comment>
<comment type="similarity">
    <text evidence="1">Belongs to the GcvH family.</text>
</comment>
<protein>
    <recommendedName>
        <fullName evidence="1">Probable glycine cleavage system H protein 3</fullName>
    </recommendedName>
</protein>
<gene>
    <name evidence="1" type="primary">gcvH3</name>
    <name type="ordered locus">Saci_0349</name>
</gene>
<proteinExistence type="inferred from homology"/>
<sequence>MKISFFNFPDDLLYEPERHVWIKVEENKVVSVGMTDLGQYLAGKIFQVSVPRRVGERVNNRTILFSVESAKWIGKIRLQIEGEVVDINERVIKNPSIINEDPYGSWIIKVSVTDVDLVKRAFKNIQDCRSQFEEEANRIVSWKNSS</sequence>
<name>GCSH3_SULAC</name>
<accession>Q4JBR4</accession>
<dbReference type="EMBL" id="CP000077">
    <property type="protein sequence ID" value="AAY79765.1"/>
    <property type="molecule type" value="Genomic_DNA"/>
</dbReference>
<dbReference type="RefSeq" id="WP_011277267.1">
    <property type="nucleotide sequence ID" value="NC_007181.1"/>
</dbReference>
<dbReference type="SMR" id="Q4JBR4"/>
<dbReference type="STRING" id="330779.Saci_0349"/>
<dbReference type="GeneID" id="14550878"/>
<dbReference type="KEGG" id="sai:Saci_0349"/>
<dbReference type="PATRIC" id="fig|330779.12.peg.344"/>
<dbReference type="eggNOG" id="arCOG01303">
    <property type="taxonomic scope" value="Archaea"/>
</dbReference>
<dbReference type="HOGENOM" id="CLU_097408_2_2_2"/>
<dbReference type="Proteomes" id="UP000001018">
    <property type="component" value="Chromosome"/>
</dbReference>
<dbReference type="GO" id="GO:0005737">
    <property type="term" value="C:cytoplasm"/>
    <property type="evidence" value="ECO:0007669"/>
    <property type="project" value="TreeGrafter"/>
</dbReference>
<dbReference type="GO" id="GO:0005960">
    <property type="term" value="C:glycine cleavage complex"/>
    <property type="evidence" value="ECO:0007669"/>
    <property type="project" value="InterPro"/>
</dbReference>
<dbReference type="GO" id="GO:0019464">
    <property type="term" value="P:glycine decarboxylation via glycine cleavage system"/>
    <property type="evidence" value="ECO:0007669"/>
    <property type="project" value="UniProtKB-UniRule"/>
</dbReference>
<dbReference type="CDD" id="cd06848">
    <property type="entry name" value="GCS_H"/>
    <property type="match status" value="1"/>
</dbReference>
<dbReference type="Gene3D" id="2.40.50.100">
    <property type="match status" value="1"/>
</dbReference>
<dbReference type="HAMAP" id="MF_00272">
    <property type="entry name" value="GcvH"/>
    <property type="match status" value="1"/>
</dbReference>
<dbReference type="InterPro" id="IPR003016">
    <property type="entry name" value="2-oxoA_DH_lipoyl-BS"/>
</dbReference>
<dbReference type="InterPro" id="IPR000089">
    <property type="entry name" value="Biotin_lipoyl"/>
</dbReference>
<dbReference type="InterPro" id="IPR002930">
    <property type="entry name" value="GCV_H"/>
</dbReference>
<dbReference type="InterPro" id="IPR033753">
    <property type="entry name" value="GCV_H/Fam206"/>
</dbReference>
<dbReference type="InterPro" id="IPR011053">
    <property type="entry name" value="Single_hybrid_motif"/>
</dbReference>
<dbReference type="PANTHER" id="PTHR11715">
    <property type="entry name" value="GLYCINE CLEAVAGE SYSTEM H PROTEIN"/>
    <property type="match status" value="1"/>
</dbReference>
<dbReference type="PANTHER" id="PTHR11715:SF3">
    <property type="entry name" value="GLYCINE CLEAVAGE SYSTEM H PROTEIN-RELATED"/>
    <property type="match status" value="1"/>
</dbReference>
<dbReference type="Pfam" id="PF01597">
    <property type="entry name" value="GCV_H"/>
    <property type="match status" value="1"/>
</dbReference>
<dbReference type="SUPFAM" id="SSF51230">
    <property type="entry name" value="Single hybrid motif"/>
    <property type="match status" value="1"/>
</dbReference>
<dbReference type="PROSITE" id="PS50968">
    <property type="entry name" value="BIOTINYL_LIPOYL"/>
    <property type="match status" value="1"/>
</dbReference>
<dbReference type="PROSITE" id="PS00189">
    <property type="entry name" value="LIPOYL"/>
    <property type="match status" value="1"/>
</dbReference>
<reference key="1">
    <citation type="journal article" date="2005" name="J. Bacteriol.">
        <title>The genome of Sulfolobus acidocaldarius, a model organism of the Crenarchaeota.</title>
        <authorList>
            <person name="Chen L."/>
            <person name="Bruegger K."/>
            <person name="Skovgaard M."/>
            <person name="Redder P."/>
            <person name="She Q."/>
            <person name="Torarinsson E."/>
            <person name="Greve B."/>
            <person name="Awayez M."/>
            <person name="Zibat A."/>
            <person name="Klenk H.-P."/>
            <person name="Garrett R.A."/>
        </authorList>
    </citation>
    <scope>NUCLEOTIDE SEQUENCE [LARGE SCALE GENOMIC DNA]</scope>
    <source>
        <strain>ATCC 33909 / DSM 639 / JCM 8929 / NBRC 15157 / NCIMB 11770</strain>
    </source>
</reference>
<feature type="chain" id="PRO_0000166281" description="Probable glycine cleavage system H protein 3">
    <location>
        <begin position="1"/>
        <end position="146"/>
    </location>
</feature>
<feature type="domain" description="Lipoyl-binding" evidence="2">
    <location>
        <begin position="29"/>
        <end position="111"/>
    </location>
</feature>
<feature type="modified residue" description="N6-lipoyllysine" evidence="1">
    <location>
        <position position="71"/>
    </location>
</feature>
<keyword id="KW-0450">Lipoyl</keyword>
<keyword id="KW-1185">Reference proteome</keyword>
<organism>
    <name type="scientific">Sulfolobus acidocaldarius (strain ATCC 33909 / DSM 639 / JCM 8929 / NBRC 15157 / NCIMB 11770)</name>
    <dbReference type="NCBI Taxonomy" id="330779"/>
    <lineage>
        <taxon>Archaea</taxon>
        <taxon>Thermoproteota</taxon>
        <taxon>Thermoprotei</taxon>
        <taxon>Sulfolobales</taxon>
        <taxon>Sulfolobaceae</taxon>
        <taxon>Sulfolobus</taxon>
    </lineage>
</organism>